<dbReference type="EC" id="1.5.1.42" evidence="1"/>
<dbReference type="EMBL" id="CU928160">
    <property type="protein sequence ID" value="CAQ97916.1"/>
    <property type="molecule type" value="Genomic_DNA"/>
</dbReference>
<dbReference type="RefSeq" id="WP_001028096.1">
    <property type="nucleotide sequence ID" value="NC_011741.1"/>
</dbReference>
<dbReference type="SMR" id="B7M8Z2"/>
<dbReference type="KEGG" id="ecr:ECIAI1_1052"/>
<dbReference type="HOGENOM" id="CLU_059021_2_2_6"/>
<dbReference type="GO" id="GO:0010181">
    <property type="term" value="F:FMN binding"/>
    <property type="evidence" value="ECO:0007669"/>
    <property type="project" value="InterPro"/>
</dbReference>
<dbReference type="GO" id="GO:0052874">
    <property type="term" value="F:FMN reductase (NADH) activity"/>
    <property type="evidence" value="ECO:0007669"/>
    <property type="project" value="UniProtKB-EC"/>
</dbReference>
<dbReference type="GO" id="GO:0008752">
    <property type="term" value="F:FMN reductase [NAD(P)H] activity"/>
    <property type="evidence" value="ECO:0007669"/>
    <property type="project" value="InterPro"/>
</dbReference>
<dbReference type="GO" id="GO:0042602">
    <property type="term" value="F:riboflavin reductase (NADPH) activity"/>
    <property type="evidence" value="ECO:0007669"/>
    <property type="project" value="UniProtKB-UniRule"/>
</dbReference>
<dbReference type="GO" id="GO:0019740">
    <property type="term" value="P:nitrogen utilization"/>
    <property type="evidence" value="ECO:0007669"/>
    <property type="project" value="UniProtKB-UniRule"/>
</dbReference>
<dbReference type="GO" id="GO:0006212">
    <property type="term" value="P:uracil catabolic process"/>
    <property type="evidence" value="ECO:0007669"/>
    <property type="project" value="UniProtKB-UniRule"/>
</dbReference>
<dbReference type="FunFam" id="2.30.110.10:FF:000002">
    <property type="entry name" value="FMN reductase (NADH) RutF"/>
    <property type="match status" value="1"/>
</dbReference>
<dbReference type="Gene3D" id="2.30.110.10">
    <property type="entry name" value="Electron Transport, Fmn-binding Protein, Chain A"/>
    <property type="match status" value="1"/>
</dbReference>
<dbReference type="HAMAP" id="MF_00833">
    <property type="entry name" value="RutF"/>
    <property type="match status" value="1"/>
</dbReference>
<dbReference type="InterPro" id="IPR002563">
    <property type="entry name" value="Flavin_Rdtase-like_dom"/>
</dbReference>
<dbReference type="InterPro" id="IPR050268">
    <property type="entry name" value="NADH-dep_flavin_reductase"/>
</dbReference>
<dbReference type="InterPro" id="IPR019917">
    <property type="entry name" value="RutF"/>
</dbReference>
<dbReference type="InterPro" id="IPR012349">
    <property type="entry name" value="Split_barrel_FMN-bd"/>
</dbReference>
<dbReference type="NCBIfam" id="TIGR03615">
    <property type="entry name" value="RutF"/>
    <property type="match status" value="1"/>
</dbReference>
<dbReference type="PANTHER" id="PTHR30466">
    <property type="entry name" value="FLAVIN REDUCTASE"/>
    <property type="match status" value="1"/>
</dbReference>
<dbReference type="PANTHER" id="PTHR30466:SF1">
    <property type="entry name" value="FMN REDUCTASE (NADH) RUTF"/>
    <property type="match status" value="1"/>
</dbReference>
<dbReference type="Pfam" id="PF01613">
    <property type="entry name" value="Flavin_Reduct"/>
    <property type="match status" value="1"/>
</dbReference>
<dbReference type="SMART" id="SM00903">
    <property type="entry name" value="Flavin_Reduct"/>
    <property type="match status" value="1"/>
</dbReference>
<dbReference type="SUPFAM" id="SSF50475">
    <property type="entry name" value="FMN-binding split barrel"/>
    <property type="match status" value="1"/>
</dbReference>
<name>RUTF_ECO8A</name>
<sequence length="164" mass="17777">MNIVDQQTFRDAMSCMGAAVNIITTDGPAGRAGFTASAVCSVTDTPPTLLVCLNRGASVWPVFNENRTLCVNTLSAGQEPLSNLFGGKTPMEHRFAAARWQTGVTGCPQLEEALVSFDCRISQVVSVGTHDILFCAIEAIHRHTTPYGLVWFDRSYHALMRPAC</sequence>
<gene>
    <name evidence="1" type="primary">rutF</name>
    <name type="ordered locus">ECIAI1_1052</name>
</gene>
<accession>B7M8Z2</accession>
<reference key="1">
    <citation type="journal article" date="2009" name="PLoS Genet.">
        <title>Organised genome dynamics in the Escherichia coli species results in highly diverse adaptive paths.</title>
        <authorList>
            <person name="Touchon M."/>
            <person name="Hoede C."/>
            <person name="Tenaillon O."/>
            <person name="Barbe V."/>
            <person name="Baeriswyl S."/>
            <person name="Bidet P."/>
            <person name="Bingen E."/>
            <person name="Bonacorsi S."/>
            <person name="Bouchier C."/>
            <person name="Bouvet O."/>
            <person name="Calteau A."/>
            <person name="Chiapello H."/>
            <person name="Clermont O."/>
            <person name="Cruveiller S."/>
            <person name="Danchin A."/>
            <person name="Diard M."/>
            <person name="Dossat C."/>
            <person name="Karoui M.E."/>
            <person name="Frapy E."/>
            <person name="Garry L."/>
            <person name="Ghigo J.M."/>
            <person name="Gilles A.M."/>
            <person name="Johnson J."/>
            <person name="Le Bouguenec C."/>
            <person name="Lescat M."/>
            <person name="Mangenot S."/>
            <person name="Martinez-Jehanne V."/>
            <person name="Matic I."/>
            <person name="Nassif X."/>
            <person name="Oztas S."/>
            <person name="Petit M.A."/>
            <person name="Pichon C."/>
            <person name="Rouy Z."/>
            <person name="Ruf C.S."/>
            <person name="Schneider D."/>
            <person name="Tourret J."/>
            <person name="Vacherie B."/>
            <person name="Vallenet D."/>
            <person name="Medigue C."/>
            <person name="Rocha E.P.C."/>
            <person name="Denamur E."/>
        </authorList>
    </citation>
    <scope>NUCLEOTIDE SEQUENCE [LARGE SCALE GENOMIC DNA]</scope>
    <source>
        <strain>IAI1</strain>
    </source>
</reference>
<feature type="chain" id="PRO_0000403025" description="FMN reductase (NADH) RutF">
    <location>
        <begin position="1"/>
        <end position="164"/>
    </location>
</feature>
<evidence type="ECO:0000255" key="1">
    <source>
        <dbReference type="HAMAP-Rule" id="MF_00833"/>
    </source>
</evidence>
<proteinExistence type="inferred from homology"/>
<comment type="function">
    <text evidence="1">Catalyzes the reduction of FMN to FMNH2 which is used to reduce pyrimidine by RutA via the Rut pathway.</text>
</comment>
<comment type="catalytic activity">
    <reaction evidence="1">
        <text>FMNH2 + NAD(+) = FMN + NADH + 2 H(+)</text>
        <dbReference type="Rhea" id="RHEA:21620"/>
        <dbReference type="ChEBI" id="CHEBI:15378"/>
        <dbReference type="ChEBI" id="CHEBI:57540"/>
        <dbReference type="ChEBI" id="CHEBI:57618"/>
        <dbReference type="ChEBI" id="CHEBI:57945"/>
        <dbReference type="ChEBI" id="CHEBI:58210"/>
        <dbReference type="EC" id="1.5.1.42"/>
    </reaction>
</comment>
<comment type="induction">
    <text evidence="1">Up-regulated by the nitrogen regulatory protein C (NtrC also called GlnG) and repressed by RutR.</text>
</comment>
<comment type="similarity">
    <text evidence="1">Belongs to the non-flavoprotein flavin reductase family. RutF subfamily.</text>
</comment>
<organism>
    <name type="scientific">Escherichia coli O8 (strain IAI1)</name>
    <dbReference type="NCBI Taxonomy" id="585034"/>
    <lineage>
        <taxon>Bacteria</taxon>
        <taxon>Pseudomonadati</taxon>
        <taxon>Pseudomonadota</taxon>
        <taxon>Gammaproteobacteria</taxon>
        <taxon>Enterobacterales</taxon>
        <taxon>Enterobacteriaceae</taxon>
        <taxon>Escherichia</taxon>
    </lineage>
</organism>
<protein>
    <recommendedName>
        <fullName evidence="1">FMN reductase (NADH) RutF</fullName>
        <ecNumber evidence="1">1.5.1.42</ecNumber>
    </recommendedName>
    <alternativeName>
        <fullName evidence="1">FMN reductase</fullName>
    </alternativeName>
    <alternativeName>
        <fullName evidence="1">NADH-flavin reductase RutF</fullName>
    </alternativeName>
    <alternativeName>
        <fullName evidence="1">NADH:flavin oxidoreductase</fullName>
    </alternativeName>
</protein>
<keyword id="KW-0285">Flavoprotein</keyword>
<keyword id="KW-0288">FMN</keyword>
<keyword id="KW-0520">NAD</keyword>
<keyword id="KW-0560">Oxidoreductase</keyword>